<gene>
    <name type="primary">Fastk</name>
</gene>
<protein>
    <recommendedName>
        <fullName>Fas-activated serine/threonine kinase</fullName>
        <shortName>FAST kinase</shortName>
        <ecNumber evidence="1">2.7.11.1</ecNumber>
        <ecNumber evidence="1">2.7.11.8</ecNumber>
    </recommendedName>
</protein>
<accession>Q9JIX9</accession>
<feature type="chain" id="PRO_0000087197" description="Fas-activated serine/threonine kinase">
    <location>
        <begin position="1"/>
        <end position="511"/>
    </location>
</feature>
<feature type="domain" description="RAP" evidence="2">
    <location>
        <begin position="439"/>
        <end position="497"/>
    </location>
</feature>
<reference key="1">
    <citation type="submission" date="1999-07" db="EMBL/GenBank/DDBJ databases">
        <title>A mouse homolog of the human Fas-activated serine/threonine kinase (FAST kinase).</title>
        <authorList>
            <person name="Van Raay T.J."/>
            <person name="Rao M.S."/>
        </authorList>
    </citation>
    <scope>NUCLEOTIDE SEQUENCE [MRNA]</scope>
</reference>
<reference key="2">
    <citation type="journal article" date="2015" name="Cell Rep.">
        <title>A mitochondria-specific isoform of FASTK is present in mitochondrial RNA granules and regulates gene expression and function.</title>
        <authorList>
            <person name="Jourdain A.A."/>
            <person name="Koppen M."/>
            <person name="Rodley C.D."/>
            <person name="Maundrell K."/>
            <person name="Gueguen N."/>
            <person name="Reynier P."/>
            <person name="Guaras A.M."/>
            <person name="Enriquez J.A."/>
            <person name="Anderson P."/>
            <person name="Simarro M."/>
            <person name="Martinou J.C."/>
        </authorList>
    </citation>
    <scope>FUNCTION</scope>
    <scope>SUBCELLULAR LOCATION</scope>
    <scope>DOMAIN</scope>
    <scope>RNA-BINDING</scope>
    <scope>DISRUPTION PHENOTYPE</scope>
</reference>
<organism>
    <name type="scientific">Mus musculus</name>
    <name type="common">Mouse</name>
    <dbReference type="NCBI Taxonomy" id="10090"/>
    <lineage>
        <taxon>Eukaryota</taxon>
        <taxon>Metazoa</taxon>
        <taxon>Chordata</taxon>
        <taxon>Craniata</taxon>
        <taxon>Vertebrata</taxon>
        <taxon>Euteleostomi</taxon>
        <taxon>Mammalia</taxon>
        <taxon>Eutheria</taxon>
        <taxon>Euarchontoglires</taxon>
        <taxon>Glires</taxon>
        <taxon>Rodentia</taxon>
        <taxon>Myomorpha</taxon>
        <taxon>Muroidea</taxon>
        <taxon>Muridae</taxon>
        <taxon>Murinae</taxon>
        <taxon>Mus</taxon>
        <taxon>Mus</taxon>
    </lineage>
</organism>
<proteinExistence type="evidence at protein level"/>
<comment type="function">
    <text evidence="1 3">Phosphorylates the splicing regulator TIA1, thereby promoting the inclusion of FAS exon 6, which leads to an mRNA encoding a pro-apoptotic form of the receptor (By similarity). Required for the biogenesis of some mitochondrial-encoded mRNAs, specifically stabilizes ND6 (NADH dehydrogenase complex subunit 6) mRNA, and regulates its levels.</text>
</comment>
<comment type="catalytic activity">
    <reaction evidence="1">
        <text>L-seryl-[Fas-activated protein] + ATP = O-phospho-L-seryl-[Fas-activated protein] + ADP + H(+)</text>
        <dbReference type="Rhea" id="RHEA:15881"/>
        <dbReference type="Rhea" id="RHEA-COMP:13713"/>
        <dbReference type="Rhea" id="RHEA-COMP:13714"/>
        <dbReference type="ChEBI" id="CHEBI:15378"/>
        <dbReference type="ChEBI" id="CHEBI:29999"/>
        <dbReference type="ChEBI" id="CHEBI:30616"/>
        <dbReference type="ChEBI" id="CHEBI:83421"/>
        <dbReference type="ChEBI" id="CHEBI:456216"/>
        <dbReference type="EC" id="2.7.11.8"/>
    </reaction>
</comment>
<comment type="catalytic activity">
    <reaction evidence="1">
        <text>L-threonyl-[Fas-activated protein] + ATP = O-phospho-L-threonyl-[Fas-activated protein] + ADP + H(+)</text>
        <dbReference type="Rhea" id="RHEA:53920"/>
        <dbReference type="Rhea" id="RHEA-COMP:13715"/>
        <dbReference type="Rhea" id="RHEA-COMP:13716"/>
        <dbReference type="ChEBI" id="CHEBI:15378"/>
        <dbReference type="ChEBI" id="CHEBI:30013"/>
        <dbReference type="ChEBI" id="CHEBI:30616"/>
        <dbReference type="ChEBI" id="CHEBI:61977"/>
        <dbReference type="ChEBI" id="CHEBI:456216"/>
        <dbReference type="EC" id="2.7.11.8"/>
    </reaction>
</comment>
<comment type="catalytic activity">
    <reaction evidence="1">
        <text>L-seryl-[protein] + ATP = O-phospho-L-seryl-[protein] + ADP + H(+)</text>
        <dbReference type="Rhea" id="RHEA:17989"/>
        <dbReference type="Rhea" id="RHEA-COMP:9863"/>
        <dbReference type="Rhea" id="RHEA-COMP:11604"/>
        <dbReference type="ChEBI" id="CHEBI:15378"/>
        <dbReference type="ChEBI" id="CHEBI:29999"/>
        <dbReference type="ChEBI" id="CHEBI:30616"/>
        <dbReference type="ChEBI" id="CHEBI:83421"/>
        <dbReference type="ChEBI" id="CHEBI:456216"/>
        <dbReference type="EC" id="2.7.11.1"/>
    </reaction>
</comment>
<comment type="catalytic activity">
    <reaction evidence="1">
        <text>L-threonyl-[protein] + ATP = O-phospho-L-threonyl-[protein] + ADP + H(+)</text>
        <dbReference type="Rhea" id="RHEA:46608"/>
        <dbReference type="Rhea" id="RHEA-COMP:11060"/>
        <dbReference type="Rhea" id="RHEA-COMP:11605"/>
        <dbReference type="ChEBI" id="CHEBI:15378"/>
        <dbReference type="ChEBI" id="CHEBI:30013"/>
        <dbReference type="ChEBI" id="CHEBI:30616"/>
        <dbReference type="ChEBI" id="CHEBI:61977"/>
        <dbReference type="ChEBI" id="CHEBI:456216"/>
        <dbReference type="EC" id="2.7.11.1"/>
    </reaction>
</comment>
<comment type="subunit">
    <text evidence="1">Interacts with TIA1; the interactions leads to TIA1 phosphorylation (By similarity). Interacts with TIAR (By similarity).</text>
</comment>
<comment type="subcellular location">
    <subcellularLocation>
        <location evidence="3">Mitochondrion matrix</location>
    </subcellularLocation>
    <text evidence="3">Colocalizes with mitochondrial RNA granules.</text>
</comment>
<comment type="domain">
    <text evidence="3">The RAP domain is essential for RNA-binding.</text>
</comment>
<comment type="PTM">
    <text evidence="1">Autophosphorylated on serine/threonine residues. Activated by dephosphorylation (By similarity).</text>
</comment>
<comment type="disruption phenotype">
    <text evidence="3">60% decrease in mitochondrial NADH dehydrogenase activity.</text>
</comment>
<comment type="similarity">
    <text evidence="4">Belongs to the FAST protein kinase family.</text>
</comment>
<dbReference type="EC" id="2.7.11.1" evidence="1"/>
<dbReference type="EC" id="2.7.11.8" evidence="1"/>
<dbReference type="EMBL" id="AF168682">
    <property type="protein sequence ID" value="AAF89660.1"/>
    <property type="molecule type" value="mRNA"/>
</dbReference>
<dbReference type="SMR" id="Q9JIX9"/>
<dbReference type="FunCoup" id="Q9JIX9">
    <property type="interactions" value="819"/>
</dbReference>
<dbReference type="STRING" id="10090.ENSMUSP00000030800"/>
<dbReference type="iPTMnet" id="Q9JIX9"/>
<dbReference type="PhosphoSitePlus" id="Q9JIX9"/>
<dbReference type="PaxDb" id="10090-ENSMUSP00000030800"/>
<dbReference type="ProteomicsDB" id="275588"/>
<dbReference type="Pumba" id="Q9JIX9"/>
<dbReference type="AGR" id="MGI:1913837"/>
<dbReference type="MGI" id="MGI:1913837">
    <property type="gene designation" value="Fastk"/>
</dbReference>
<dbReference type="eggNOG" id="ENOG502QXK7">
    <property type="taxonomic scope" value="Eukaryota"/>
</dbReference>
<dbReference type="InParanoid" id="Q9JIX9"/>
<dbReference type="BRENDA" id="2.7.11.8">
    <property type="organism ID" value="3474"/>
</dbReference>
<dbReference type="ChiTaRS" id="Fastk">
    <property type="organism name" value="mouse"/>
</dbReference>
<dbReference type="PRO" id="PR:Q9JIX9"/>
<dbReference type="Proteomes" id="UP000000589">
    <property type="component" value="Unplaced"/>
</dbReference>
<dbReference type="RNAct" id="Q9JIX9">
    <property type="molecule type" value="protein"/>
</dbReference>
<dbReference type="GO" id="GO:0005759">
    <property type="term" value="C:mitochondrial matrix"/>
    <property type="evidence" value="ECO:0007669"/>
    <property type="project" value="UniProtKB-SubCell"/>
</dbReference>
<dbReference type="GO" id="GO:0005739">
    <property type="term" value="C:mitochondrion"/>
    <property type="evidence" value="ECO:0007005"/>
    <property type="project" value="MGI"/>
</dbReference>
<dbReference type="GO" id="GO:0016607">
    <property type="term" value="C:nuclear speck"/>
    <property type="evidence" value="ECO:0000314"/>
    <property type="project" value="UniProtKB"/>
</dbReference>
<dbReference type="GO" id="GO:0005524">
    <property type="term" value="F:ATP binding"/>
    <property type="evidence" value="ECO:0007669"/>
    <property type="project" value="UniProtKB-KW"/>
</dbReference>
<dbReference type="GO" id="GO:0033867">
    <property type="term" value="F:Fas-activated serine/threonine kinase activity"/>
    <property type="evidence" value="ECO:0007669"/>
    <property type="project" value="UniProtKB-EC"/>
</dbReference>
<dbReference type="GO" id="GO:0106310">
    <property type="term" value="F:protein serine kinase activity"/>
    <property type="evidence" value="ECO:0007669"/>
    <property type="project" value="RHEA"/>
</dbReference>
<dbReference type="GO" id="GO:0003723">
    <property type="term" value="F:RNA binding"/>
    <property type="evidence" value="ECO:0007669"/>
    <property type="project" value="UniProtKB-KW"/>
</dbReference>
<dbReference type="GO" id="GO:0006915">
    <property type="term" value="P:apoptotic process"/>
    <property type="evidence" value="ECO:0007669"/>
    <property type="project" value="UniProtKB-KW"/>
</dbReference>
<dbReference type="GO" id="GO:0044528">
    <property type="term" value="P:regulation of mitochondrial mRNA stability"/>
    <property type="evidence" value="ECO:0007669"/>
    <property type="project" value="InterPro"/>
</dbReference>
<dbReference type="InterPro" id="IPR013579">
    <property type="entry name" value="FAST_2"/>
</dbReference>
<dbReference type="InterPro" id="IPR050870">
    <property type="entry name" value="FAST_kinase"/>
</dbReference>
<dbReference type="InterPro" id="IPR010622">
    <property type="entry name" value="FAST_Leu-rich"/>
</dbReference>
<dbReference type="InterPro" id="IPR013584">
    <property type="entry name" value="RAP"/>
</dbReference>
<dbReference type="PANTHER" id="PTHR21228:SF4">
    <property type="entry name" value="FAS-ACTIVATED SERINE_THREONINE KINASE"/>
    <property type="match status" value="1"/>
</dbReference>
<dbReference type="PANTHER" id="PTHR21228">
    <property type="entry name" value="FAST LEU-RICH DOMAIN-CONTAINING"/>
    <property type="match status" value="1"/>
</dbReference>
<dbReference type="Pfam" id="PF06743">
    <property type="entry name" value="FAST_1"/>
    <property type="match status" value="1"/>
</dbReference>
<dbReference type="Pfam" id="PF08368">
    <property type="entry name" value="FAST_2"/>
    <property type="match status" value="1"/>
</dbReference>
<dbReference type="Pfam" id="PF08373">
    <property type="entry name" value="RAP"/>
    <property type="match status" value="1"/>
</dbReference>
<dbReference type="SMART" id="SM00952">
    <property type="entry name" value="RAP"/>
    <property type="match status" value="1"/>
</dbReference>
<dbReference type="PROSITE" id="PS51286">
    <property type="entry name" value="RAP"/>
    <property type="match status" value="1"/>
</dbReference>
<sequence>MLRILLSAQTSPARLSGLLLIPPVQPCCLGPSKSGDRPFGGGPVQGLQRLLEQARSPGELLRWLSQNPTKVRAHHYPVALRRLGQLLVSQPRPSPVEQATLQDLSQLIIRNCPSFDVHTIHVCLHLAVLLGFPSDGPLLCALEQERRSRLPPKPPSPHRPAIYGGQRLEVALSCPRFLQYPRQHLIRSLAEARPEELTPHVMVLLAQHLARHRLREPQLLEAIAHFLVVQEAQLNSKVVQKLVLPFGRLNYMPLEQQFMPCLERILAREAGVAPLATVNILMSLCQLQCLPFRALQFVFSPSFINHINGTPPSLIVRRYLSLLDTAVELELPGYQGPRLPQRQRVPIFPQPLITDRARCKYSHKDMVAEGLRQLLGEENYRQNLTVPPGYCTDFLLCVSSSGAVLPMRTQDPFLPYPPRSCQQDQANFNSTTQDPAQRVVLMLRERWHFCRDGRVLLGSRALRERHLGLMGYQLLPLPFEELESQRGLPQLKSYLRQKLQALGFRWGPEGG</sequence>
<name>FASTK_MOUSE</name>
<keyword id="KW-0053">Apoptosis</keyword>
<keyword id="KW-0067">ATP-binding</keyword>
<keyword id="KW-0418">Kinase</keyword>
<keyword id="KW-0496">Mitochondrion</keyword>
<keyword id="KW-0547">Nucleotide-binding</keyword>
<keyword id="KW-0597">Phosphoprotein</keyword>
<keyword id="KW-1185">Reference proteome</keyword>
<keyword id="KW-0694">RNA-binding</keyword>
<keyword id="KW-0723">Serine/threonine-protein kinase</keyword>
<keyword id="KW-0808">Transferase</keyword>
<evidence type="ECO:0000250" key="1">
    <source>
        <dbReference type="UniProtKB" id="Q14296"/>
    </source>
</evidence>
<evidence type="ECO:0000255" key="2">
    <source>
        <dbReference type="PROSITE-ProRule" id="PRU00619"/>
    </source>
</evidence>
<evidence type="ECO:0000269" key="3">
    <source>
    </source>
</evidence>
<evidence type="ECO:0000305" key="4"/>